<reference key="1">
    <citation type="journal article" date="2005" name="J. Bacteriol.">
        <title>Whole-genome sequencing of Staphylococcus haemolyticus uncovers the extreme plasticity of its genome and the evolution of human-colonizing staphylococcal species.</title>
        <authorList>
            <person name="Takeuchi F."/>
            <person name="Watanabe S."/>
            <person name="Baba T."/>
            <person name="Yuzawa H."/>
            <person name="Ito T."/>
            <person name="Morimoto Y."/>
            <person name="Kuroda M."/>
            <person name="Cui L."/>
            <person name="Takahashi M."/>
            <person name="Ankai A."/>
            <person name="Baba S."/>
            <person name="Fukui S."/>
            <person name="Lee J.C."/>
            <person name="Hiramatsu K."/>
        </authorList>
    </citation>
    <scope>NUCLEOTIDE SEQUENCE [LARGE SCALE GENOMIC DNA]</scope>
    <source>
        <strain>JCSC1435</strain>
    </source>
</reference>
<proteinExistence type="inferred from homology"/>
<keyword id="KW-0963">Cytoplasm</keyword>
<keyword id="KW-0560">Oxidoreductase</keyword>
<organism>
    <name type="scientific">Staphylococcus haemolyticus (strain JCSC1435)</name>
    <dbReference type="NCBI Taxonomy" id="279808"/>
    <lineage>
        <taxon>Bacteria</taxon>
        <taxon>Bacillati</taxon>
        <taxon>Bacillota</taxon>
        <taxon>Bacilli</taxon>
        <taxon>Bacillales</taxon>
        <taxon>Staphylococcaceae</taxon>
        <taxon>Staphylococcus</taxon>
    </lineage>
</organism>
<comment type="function">
    <text evidence="1">Catalyzes the formation of sulfite from adenosine 5'-phosphosulfate (APS) using thioredoxin as an electron donor.</text>
</comment>
<comment type="catalytic activity">
    <reaction evidence="1">
        <text>[thioredoxin]-disulfide + sulfite + AMP + 2 H(+) = adenosine 5'-phosphosulfate + [thioredoxin]-dithiol</text>
        <dbReference type="Rhea" id="RHEA:21976"/>
        <dbReference type="Rhea" id="RHEA-COMP:10698"/>
        <dbReference type="Rhea" id="RHEA-COMP:10700"/>
        <dbReference type="ChEBI" id="CHEBI:15378"/>
        <dbReference type="ChEBI" id="CHEBI:17359"/>
        <dbReference type="ChEBI" id="CHEBI:29950"/>
        <dbReference type="ChEBI" id="CHEBI:50058"/>
        <dbReference type="ChEBI" id="CHEBI:58243"/>
        <dbReference type="ChEBI" id="CHEBI:456215"/>
        <dbReference type="EC" id="1.8.4.10"/>
    </reaction>
</comment>
<comment type="cofactor">
    <cofactor evidence="1">
        <name>[4Fe-4S] cluster</name>
        <dbReference type="ChEBI" id="CHEBI:49883"/>
    </cofactor>
    <text evidence="1">Binds 1 [4Fe-4S] cluster per subunit.</text>
</comment>
<comment type="pathway">
    <text evidence="1">Sulfur metabolism; hydrogen sulfide biosynthesis; sulfite from sulfate.</text>
</comment>
<comment type="subcellular location">
    <subcellularLocation>
        <location evidence="1">Cytoplasm</location>
    </subcellularLocation>
</comment>
<comment type="similarity">
    <text evidence="1">Belongs to the PAPS reductase family. CysH subfamily.</text>
</comment>
<gene>
    <name evidence="1" type="primary">cysH</name>
    <name type="ordered locus">SH0413</name>
</gene>
<evidence type="ECO:0000255" key="1">
    <source>
        <dbReference type="HAMAP-Rule" id="MF_00063"/>
    </source>
</evidence>
<feature type="chain" id="PRO_1000008941" description="Adenosine 5'-phosphosulfate reductase">
    <location>
        <begin position="1"/>
        <end position="243"/>
    </location>
</feature>
<dbReference type="EC" id="1.8.4.10" evidence="1"/>
<dbReference type="EMBL" id="AP006716">
    <property type="protein sequence ID" value="BAE03722.1"/>
    <property type="molecule type" value="Genomic_DNA"/>
</dbReference>
<dbReference type="RefSeq" id="WP_011274739.1">
    <property type="nucleotide sequence ID" value="NC_007168.1"/>
</dbReference>
<dbReference type="SMR" id="Q4L9F3"/>
<dbReference type="KEGG" id="sha:SH0413"/>
<dbReference type="eggNOG" id="COG0175">
    <property type="taxonomic scope" value="Bacteria"/>
</dbReference>
<dbReference type="HOGENOM" id="CLU_044089_2_1_9"/>
<dbReference type="OrthoDB" id="9772604at2"/>
<dbReference type="Proteomes" id="UP000000543">
    <property type="component" value="Chromosome"/>
</dbReference>
<dbReference type="GO" id="GO:0005737">
    <property type="term" value="C:cytoplasm"/>
    <property type="evidence" value="ECO:0007669"/>
    <property type="project" value="UniProtKB-SubCell"/>
</dbReference>
<dbReference type="GO" id="GO:0051539">
    <property type="term" value="F:4 iron, 4 sulfur cluster binding"/>
    <property type="evidence" value="ECO:0007669"/>
    <property type="project" value="UniProtKB-UniRule"/>
</dbReference>
<dbReference type="GO" id="GO:0043866">
    <property type="term" value="F:adenylyl-sulfate reductase (thioredoxin) activity"/>
    <property type="evidence" value="ECO:0007669"/>
    <property type="project" value="UniProtKB-EC"/>
</dbReference>
<dbReference type="GO" id="GO:0004604">
    <property type="term" value="F:phosphoadenylyl-sulfate reductase (thioredoxin) activity"/>
    <property type="evidence" value="ECO:0007669"/>
    <property type="project" value="UniProtKB-UniRule"/>
</dbReference>
<dbReference type="GO" id="GO:0019344">
    <property type="term" value="P:cysteine biosynthetic process"/>
    <property type="evidence" value="ECO:0007669"/>
    <property type="project" value="InterPro"/>
</dbReference>
<dbReference type="GO" id="GO:0070814">
    <property type="term" value="P:hydrogen sulfide biosynthetic process"/>
    <property type="evidence" value="ECO:0007669"/>
    <property type="project" value="UniProtKB-UniRule"/>
</dbReference>
<dbReference type="GO" id="GO:0019379">
    <property type="term" value="P:sulfate assimilation, phosphoadenylyl sulfate reduction by phosphoadenylyl-sulfate reductase (thioredoxin)"/>
    <property type="evidence" value="ECO:0007669"/>
    <property type="project" value="UniProtKB-UniRule"/>
</dbReference>
<dbReference type="CDD" id="cd23945">
    <property type="entry name" value="PAPS_reductase"/>
    <property type="match status" value="1"/>
</dbReference>
<dbReference type="FunFam" id="3.40.50.620:FF:000095">
    <property type="entry name" value="Phosphoadenosine phosphosulfate reductase"/>
    <property type="match status" value="1"/>
</dbReference>
<dbReference type="Gene3D" id="3.40.50.620">
    <property type="entry name" value="HUPs"/>
    <property type="match status" value="1"/>
</dbReference>
<dbReference type="HAMAP" id="MF_00063">
    <property type="entry name" value="CysH"/>
    <property type="match status" value="1"/>
</dbReference>
<dbReference type="InterPro" id="IPR011798">
    <property type="entry name" value="APS_reductase"/>
</dbReference>
<dbReference type="InterPro" id="IPR004511">
    <property type="entry name" value="PAPS/APS_Rdtase"/>
</dbReference>
<dbReference type="InterPro" id="IPR002500">
    <property type="entry name" value="PAPS_reduct_dom"/>
</dbReference>
<dbReference type="InterPro" id="IPR014729">
    <property type="entry name" value="Rossmann-like_a/b/a_fold"/>
</dbReference>
<dbReference type="NCBIfam" id="TIGR02055">
    <property type="entry name" value="APS_reductase"/>
    <property type="match status" value="1"/>
</dbReference>
<dbReference type="NCBIfam" id="TIGR00434">
    <property type="entry name" value="cysH"/>
    <property type="match status" value="1"/>
</dbReference>
<dbReference type="NCBIfam" id="NF002537">
    <property type="entry name" value="PRK02090.1"/>
    <property type="match status" value="1"/>
</dbReference>
<dbReference type="PANTHER" id="PTHR46509">
    <property type="entry name" value="PHOSPHOADENOSINE PHOSPHOSULFATE REDUCTASE"/>
    <property type="match status" value="1"/>
</dbReference>
<dbReference type="PANTHER" id="PTHR46509:SF1">
    <property type="entry name" value="PHOSPHOADENOSINE PHOSPHOSULFATE REDUCTASE"/>
    <property type="match status" value="1"/>
</dbReference>
<dbReference type="Pfam" id="PF01507">
    <property type="entry name" value="PAPS_reduct"/>
    <property type="match status" value="1"/>
</dbReference>
<dbReference type="PIRSF" id="PIRSF000857">
    <property type="entry name" value="PAPS_reductase"/>
    <property type="match status" value="1"/>
</dbReference>
<dbReference type="SUPFAM" id="SSF52402">
    <property type="entry name" value="Adenine nucleotide alpha hydrolases-like"/>
    <property type="match status" value="1"/>
</dbReference>
<name>CYSH_STAHJ</name>
<protein>
    <recommendedName>
        <fullName evidence="1">Adenosine 5'-phosphosulfate reductase</fullName>
        <shortName evidence="1">APS reductase</shortName>
        <ecNumber evidence="1">1.8.4.10</ecNumber>
    </recommendedName>
    <alternativeName>
        <fullName evidence="1">5'-adenylylsulfate reductase</fullName>
    </alternativeName>
    <alternativeName>
        <fullName evidence="1">Thioredoxin-dependent 5'-adenylylsulfate reductase</fullName>
    </alternativeName>
</protein>
<sequence>MSVPTITYENFEGDPFIDSISTDDATKGAYEILEWAYRTYGDSIVYSCSFGAESMVLIDLIYQIKPDAQIVFLDTDLHFQETYDLIDRVKEHFPKLRIEMKKPDLTLEEQADKYNPALWKNNPNQCCYIRKIKPLEEVLGGAVAWVSGLRRDQSPTRANTNFINKDERFKSVKVCPLIYWTEDEVWDYIKKHDLPYNALHDQHYPSIGCIPCTAPVFDSEDSRAGRWSNFDKTECGLHVADKP</sequence>
<accession>Q4L9F3</accession>